<dbReference type="EMBL" id="CU914619">
    <property type="status" value="NOT_ANNOTATED_CDS"/>
    <property type="molecule type" value="Genomic_DNA"/>
</dbReference>
<dbReference type="RefSeq" id="NP_001410993.1">
    <property type="nucleotide sequence ID" value="NM_001424064.1"/>
</dbReference>
<dbReference type="RefSeq" id="XP_001919024.1">
    <property type="nucleotide sequence ID" value="XM_001918989.4"/>
</dbReference>
<dbReference type="SMR" id="A0A0R4IDX9"/>
<dbReference type="FunCoup" id="A0A0R4IDX9">
    <property type="interactions" value="1753"/>
</dbReference>
<dbReference type="GlyCosmos" id="A0A0R4IDX9">
    <property type="glycosylation" value="1 site, No reported glycans"/>
</dbReference>
<dbReference type="PaxDb" id="7955-ENSDARP00000099454"/>
<dbReference type="Ensembl" id="ENSDART00000172074">
    <property type="protein sequence ID" value="ENSDARP00000130916"/>
    <property type="gene ID" value="ENSDARG00000103663"/>
</dbReference>
<dbReference type="GeneID" id="100150223"/>
<dbReference type="AGR" id="ZFIN:ZDB-GENE-141216-96"/>
<dbReference type="ZFIN" id="ZDB-GENE-141216-96">
    <property type="gene designation" value="ninj1"/>
</dbReference>
<dbReference type="eggNOG" id="ENOG502S12Z">
    <property type="taxonomic scope" value="Eukaryota"/>
</dbReference>
<dbReference type="InParanoid" id="A0A0R4IDX9"/>
<dbReference type="OMA" id="ESCVMAF"/>
<dbReference type="OrthoDB" id="6114058at2759"/>
<dbReference type="PhylomeDB" id="A0A0R4IDX9"/>
<dbReference type="PRO" id="PR:A0A0R4IDX9"/>
<dbReference type="Proteomes" id="UP000000437">
    <property type="component" value="Chromosome 11"/>
</dbReference>
<dbReference type="GO" id="GO:0005886">
    <property type="term" value="C:plasma membrane"/>
    <property type="evidence" value="ECO:0000250"/>
    <property type="project" value="UniProtKB"/>
</dbReference>
<dbReference type="GO" id="GO:0097060">
    <property type="term" value="C:synaptic membrane"/>
    <property type="evidence" value="ECO:0007669"/>
    <property type="project" value="UniProtKB-SubCell"/>
</dbReference>
<dbReference type="GO" id="GO:0098631">
    <property type="term" value="F:cell adhesion mediator activity"/>
    <property type="evidence" value="ECO:0000250"/>
    <property type="project" value="UniProtKB"/>
</dbReference>
<dbReference type="GO" id="GO:0001530">
    <property type="term" value="F:lipopolysaccharide binding"/>
    <property type="evidence" value="ECO:0000250"/>
    <property type="project" value="UniProtKB"/>
</dbReference>
<dbReference type="GO" id="GO:0140912">
    <property type="term" value="F:membrane destabilizing activity"/>
    <property type="evidence" value="ECO:0000250"/>
    <property type="project" value="UniProtKB"/>
</dbReference>
<dbReference type="GO" id="GO:0001525">
    <property type="term" value="P:angiogenesis"/>
    <property type="evidence" value="ECO:0007669"/>
    <property type="project" value="UniProtKB-KW"/>
</dbReference>
<dbReference type="GO" id="GO:0007155">
    <property type="term" value="P:cell adhesion"/>
    <property type="evidence" value="ECO:0000250"/>
    <property type="project" value="UniProtKB"/>
</dbReference>
<dbReference type="GO" id="GO:0071474">
    <property type="term" value="P:cellular hyperosmotic response"/>
    <property type="evidence" value="ECO:0000250"/>
    <property type="project" value="UniProtKB"/>
</dbReference>
<dbReference type="GO" id="GO:0019835">
    <property type="term" value="P:cytolysis"/>
    <property type="evidence" value="ECO:0000250"/>
    <property type="project" value="UniProtKB"/>
</dbReference>
<dbReference type="GO" id="GO:0097707">
    <property type="term" value="P:ferroptosis"/>
    <property type="evidence" value="ECO:0000250"/>
    <property type="project" value="UniProtKB"/>
</dbReference>
<dbReference type="GO" id="GO:0007507">
    <property type="term" value="P:heart development"/>
    <property type="evidence" value="ECO:0000315"/>
    <property type="project" value="ZFIN"/>
</dbReference>
<dbReference type="GO" id="GO:0034113">
    <property type="term" value="P:heterotypic cell-cell adhesion"/>
    <property type="evidence" value="ECO:0000250"/>
    <property type="project" value="UniProtKB"/>
</dbReference>
<dbReference type="GO" id="GO:0031640">
    <property type="term" value="P:killing of cells of another organism"/>
    <property type="evidence" value="ECO:0007669"/>
    <property type="project" value="UniProtKB-KW"/>
</dbReference>
<dbReference type="GO" id="GO:0002232">
    <property type="term" value="P:leukocyte chemotaxis involved in inflammatory response"/>
    <property type="evidence" value="ECO:0000250"/>
    <property type="project" value="UniProtKB"/>
</dbReference>
<dbReference type="GO" id="GO:0042692">
    <property type="term" value="P:muscle cell differentiation"/>
    <property type="evidence" value="ECO:0000315"/>
    <property type="project" value="UniProtKB"/>
</dbReference>
<dbReference type="GO" id="GO:0050729">
    <property type="term" value="P:positive regulation of inflammatory response"/>
    <property type="evidence" value="ECO:0000250"/>
    <property type="project" value="UniProtKB"/>
</dbReference>
<dbReference type="GO" id="GO:0034145">
    <property type="term" value="P:positive regulation of toll-like receptor 4 signaling pathway"/>
    <property type="evidence" value="ECO:0000250"/>
    <property type="project" value="UniProtKB"/>
</dbReference>
<dbReference type="GO" id="GO:0045765">
    <property type="term" value="P:regulation of angiogenesis"/>
    <property type="evidence" value="ECO:0000250"/>
    <property type="project" value="UniProtKB"/>
</dbReference>
<dbReference type="GO" id="GO:0007519">
    <property type="term" value="P:skeletal muscle tissue development"/>
    <property type="evidence" value="ECO:0000315"/>
    <property type="project" value="ZFIN"/>
</dbReference>
<dbReference type="GO" id="GO:0042246">
    <property type="term" value="P:tissue regeneration"/>
    <property type="evidence" value="ECO:0007669"/>
    <property type="project" value="InterPro"/>
</dbReference>
<dbReference type="InterPro" id="IPR007007">
    <property type="entry name" value="Ninjurin"/>
</dbReference>
<dbReference type="PANTHER" id="PTHR12316:SF19">
    <property type="entry name" value="NINJURIN-1"/>
    <property type="match status" value="1"/>
</dbReference>
<dbReference type="PANTHER" id="PTHR12316">
    <property type="entry name" value="NINJURIN-RELATED"/>
    <property type="match status" value="1"/>
</dbReference>
<dbReference type="Pfam" id="PF04923">
    <property type="entry name" value="Ninjurin"/>
    <property type="match status" value="1"/>
</dbReference>
<comment type="function">
    <text evidence="1 2 6">Effector of various programmed cell death, such as pyroptosis and necroptosis, which mediates plasma membrane rupture (cytolysis) (By similarity). Oligomerizes in response to death stimuli and forms ring-like structures on the plasma membrane: acts by cutting and shedding membrane disks, like a cookie cutter, leading to membrane damage and loss that cannot be repaired by the cell (By similarity). Plasma membrane rupture leads to release intracellular molecules named damage-associated molecular patterns (DAMPs) that propagate the inflammatory response (By similarity). Mechanistically, mediates plasma membrane rupture by introducing hydrophilic faces of 2 alpha helices into the hydrophobic membrane (By similarity). Induces plasma membrane rupture downstream of Gasdermin (GSDMA, GSDMB, GSDMC, GSDMD, or GSDME) or MLKL during pyroptosis or necroptosis, respectively (By similarity). Also acts as an effector of PANoptosis and ferroptosis (By similarity). Induces plasma membrane rupture in response to cell swelling caused by osmotic stress (By similarity). Acts as a regulator of Toll-like receptor 4 (TLR4) signaling triggered by lipopolysaccharide (LPS) during systemic inflammation; directly binds LPS (By similarity). Involved in leukocyte migration during inflammation by promoting transendothelial migration of macrophages via homotypic binding (By similarity). Promotes the migration of monocytes across the brain endothelium to central nervous system inflammatory lesions (By similarity). Also acts as a homophilic transmembrane adhesion molecule involved in various processes such as axonal growth, cell chemotaxis and angiogenesis (By similarity). Promotes cell adhesion by mediating homophilic interactions via its extracellular N-terminal adhesion motif (N-NAM) (By similarity). Also involved in striated muscle growth and differentiation (PubMed:31091274).</text>
</comment>
<comment type="activity regulation">
    <text evidence="2">In normal conditions, NINJ1 is inactivated. In response to death stimuli, homooligomerizes and disrupts membrane integrity by introducing the hydrophilic faces of alpha1 and alpha2 helices into the hydrophobic membrane (By similarity). Homooligomerization and ability to mediate plasma membrane rupture is inhibited by glycine; it is unclear whether glycine directly or indirectly inhibits homooligomerization (By similarity).</text>
</comment>
<comment type="activity regulation">
    <molecule>Ninjurin-1</molecule>
    <text evidence="1 2">In response to death stimuli, homooligomerizes and disrupts membrane integrity by introducing the hydrophilic faces of alpha1 and alpha2 helices into the hydrophobic membrane (By similarity). Homooligomerization and ability to mediate plasma membrane rupture is inhibited by glycine; it is unclear whether glycine directly or indirectly inhibits homooligomerization. In normal conditions, NINJ1 is autoinhibited via formation of a homodimer: in the inactive homodimer, the alpha1 and alpha2 helices (residues 41-71) form a single transmembrane region without a kink, in which hydrophilic faces of alpha1 and alpha2 helices are sequestered (By similarity).</text>
</comment>
<comment type="subunit">
    <text evidence="2">Homooligomer; in response to death stimuli, homooligomerizes into long, highly branched filaments and large, ring-shaped structures in the membrane.</text>
</comment>
<comment type="subunit">
    <molecule>Ninjurin-1</molecule>
    <text evidence="1 2">Homodimer; in absence of death stimuli, forms an inactive homodimer (By similarity). Homooligomer; in response to death stimuli, homooligomerizes into long, highly branched filaments and large, ring-shaped structures in the membrane (By similarity).</text>
</comment>
<comment type="subcellular location">
    <molecule>Ninjurin-1</molecule>
    <subcellularLocation>
        <location evidence="2">Cell membrane</location>
        <topology evidence="2">Multi-pass membrane protein</topology>
    </subcellularLocation>
    <subcellularLocation>
        <location evidence="1">Synaptic cell membrane</location>
        <topology evidence="3">Multi-pass membrane protein</topology>
    </subcellularLocation>
</comment>
<comment type="domain">
    <molecule>Ninjurin-1</molecule>
    <text evidence="1 2">Composed of 4 alpha helices: 2 hydrophobic transmembrane regions (alpha3 and alpha4) and 2 alpha helices (alpha1 and alpha2) (By similarity). Alpha1 and alpha2 feature one hydrophobic side and a hydrophilic side (By similarity). In normal conditions, NINJ1 is inactivated and alpha1 and alpha2 helices are not inserted into the membrane (By similarity). Following NINJ1 activation, alpha1 and alpha2 helices insert into the membrane and drive NINJ1 oligomerization via interactions between alpha3 and alpha4 and the hydrophobic face of alpha1 from an adjacent subunit (By similarity). Such structures disrupt membrane integrity and form a lesion through the introduction of the hydrophilic faces of alpha1 and alpha2 into the hydrophobic membrane (By similarity). In absence of death stimuli, forms an inactive homodimer, where the alpha1 and alpha2 helices form a single transmembrane region without a kink: in the homodimer, hydrophilic faces of alpha1 and alpha2 helices are sequestered and the binding site for kinked alpha1 and alpha2 helices from neighboring activated NINJ1 molecules are occluded, thereby preventing membrane rupture (By similarity). The topology shown in the entry corresponds to the activated form (By similarity).</text>
</comment>
<comment type="domain">
    <molecule>Ninjurin-1</molecule>
    <text evidence="1 2">Composed of 4 alpha helices: 2 hydrophobic transmembrane regions (alpha3 and alpha4) and 2 alpha helices (alpha1 and alpha2). Alpha1 and alpha2 feature one hydrophobic side and a hydrophilic side. Following NINJ1 activation, alpha1 and alpha2 helices insert into the membrane and drive NINJ1 oligomerization via interactions between alpha3 and alpha4 and the hydrophobic face of alpha1 from an adjacent subunit. Such structures disrupt membrane integrity and form a lesion through the introduction of the hydrophilic faces of alpha1 and alpha2 into the hydrophobic membrane (By similarity). In absence of death stimuli, NINJ1 is an inactive homodimer, where the alpha1 and alpha2 helices form a single transmembrane region without a kink: in the homodimer, hydrophilic faces of alpha1 and alpha2 helices are sequestered and the binding site for kinked alpha1 and alpha2 helices from neighboring activated NINJ1 molecules are occluded, thereby preventing membrane rupture. The topology shown in the entry corresponds to the activated form (By similarity).</text>
</comment>
<comment type="disruption phenotype">
    <text evidence="6">Morpholino knockdown of the protein results in impaired heart and skeletal muscle development.</text>
</comment>
<comment type="similarity">
    <text evidence="8">Belongs to the ninjurin family.</text>
</comment>
<name>NINJ1_DANRE</name>
<proteinExistence type="inferred from homology"/>
<accession>A0A0R4IDX9</accession>
<organism>
    <name type="scientific">Danio rerio</name>
    <name type="common">Zebrafish</name>
    <name type="synonym">Brachydanio rerio</name>
    <dbReference type="NCBI Taxonomy" id="7955"/>
    <lineage>
        <taxon>Eukaryota</taxon>
        <taxon>Metazoa</taxon>
        <taxon>Chordata</taxon>
        <taxon>Craniata</taxon>
        <taxon>Vertebrata</taxon>
        <taxon>Euteleostomi</taxon>
        <taxon>Actinopterygii</taxon>
        <taxon>Neopterygii</taxon>
        <taxon>Teleostei</taxon>
        <taxon>Ostariophysi</taxon>
        <taxon>Cypriniformes</taxon>
        <taxon>Danionidae</taxon>
        <taxon>Danioninae</taxon>
        <taxon>Danio</taxon>
    </lineage>
</organism>
<sequence length="146" mass="16131">MASEAMELNGGVNRRDDPGARPQQGRMSRNTPLNMNHYANKKSAAESMLDIALLMANASQLKTVLELGPSFSFYIPLITLISISLTLQIIVGILLIFIVKWNLNDSSKHYILNLLENIVTALVFIVVVVNVFITAFGVQRPDDKTS</sequence>
<evidence type="ECO:0000250" key="1">
    <source>
        <dbReference type="UniProtKB" id="O70131"/>
    </source>
</evidence>
<evidence type="ECO:0000250" key="2">
    <source>
        <dbReference type="UniProtKB" id="Q92982"/>
    </source>
</evidence>
<evidence type="ECO:0000255" key="3"/>
<evidence type="ECO:0000255" key="4">
    <source>
        <dbReference type="PROSITE-ProRule" id="PRU00498"/>
    </source>
</evidence>
<evidence type="ECO:0000256" key="5">
    <source>
        <dbReference type="SAM" id="MobiDB-lite"/>
    </source>
</evidence>
<evidence type="ECO:0000269" key="6">
    <source>
    </source>
</evidence>
<evidence type="ECO:0000303" key="7">
    <source>
    </source>
</evidence>
<evidence type="ECO:0000305" key="8"/>
<evidence type="ECO:0000312" key="9">
    <source>
        <dbReference type="ZFIN" id="ZDB-GENE-141216-96"/>
    </source>
</evidence>
<reference key="1">
    <citation type="journal article" date="2013" name="Nature">
        <title>The zebrafish reference genome sequence and its relationship to the human genome.</title>
        <authorList>
            <person name="Howe K."/>
            <person name="Clark M.D."/>
            <person name="Torroja C.F."/>
            <person name="Torrance J."/>
            <person name="Berthelot C."/>
            <person name="Muffato M."/>
            <person name="Collins J.E."/>
            <person name="Humphray S."/>
            <person name="McLaren K."/>
            <person name="Matthews L."/>
            <person name="McLaren S."/>
            <person name="Sealy I."/>
            <person name="Caccamo M."/>
            <person name="Churcher C."/>
            <person name="Scott C."/>
            <person name="Barrett J.C."/>
            <person name="Koch R."/>
            <person name="Rauch G.J."/>
            <person name="White S."/>
            <person name="Chow W."/>
            <person name="Kilian B."/>
            <person name="Quintais L.T."/>
            <person name="Guerra-Assuncao J.A."/>
            <person name="Zhou Y."/>
            <person name="Gu Y."/>
            <person name="Yen J."/>
            <person name="Vogel J.H."/>
            <person name="Eyre T."/>
            <person name="Redmond S."/>
            <person name="Banerjee R."/>
            <person name="Chi J."/>
            <person name="Fu B."/>
            <person name="Langley E."/>
            <person name="Maguire S.F."/>
            <person name="Laird G.K."/>
            <person name="Lloyd D."/>
            <person name="Kenyon E."/>
            <person name="Donaldson S."/>
            <person name="Sehra H."/>
            <person name="Almeida-King J."/>
            <person name="Loveland J."/>
            <person name="Trevanion S."/>
            <person name="Jones M."/>
            <person name="Quail M."/>
            <person name="Willey D."/>
            <person name="Hunt A."/>
            <person name="Burton J."/>
            <person name="Sims S."/>
            <person name="McLay K."/>
            <person name="Plumb B."/>
            <person name="Davis J."/>
            <person name="Clee C."/>
            <person name="Oliver K."/>
            <person name="Clark R."/>
            <person name="Riddle C."/>
            <person name="Elliot D."/>
            <person name="Threadgold G."/>
            <person name="Harden G."/>
            <person name="Ware D."/>
            <person name="Begum S."/>
            <person name="Mortimore B."/>
            <person name="Kerry G."/>
            <person name="Heath P."/>
            <person name="Phillimore B."/>
            <person name="Tracey A."/>
            <person name="Corby N."/>
            <person name="Dunn M."/>
            <person name="Johnson C."/>
            <person name="Wood J."/>
            <person name="Clark S."/>
            <person name="Pelan S."/>
            <person name="Griffiths G."/>
            <person name="Smith M."/>
            <person name="Glithero R."/>
            <person name="Howden P."/>
            <person name="Barker N."/>
            <person name="Lloyd C."/>
            <person name="Stevens C."/>
            <person name="Harley J."/>
            <person name="Holt K."/>
            <person name="Panagiotidis G."/>
            <person name="Lovell J."/>
            <person name="Beasley H."/>
            <person name="Henderson C."/>
            <person name="Gordon D."/>
            <person name="Auger K."/>
            <person name="Wright D."/>
            <person name="Collins J."/>
            <person name="Raisen C."/>
            <person name="Dyer L."/>
            <person name="Leung K."/>
            <person name="Robertson L."/>
            <person name="Ambridge K."/>
            <person name="Leongamornlert D."/>
            <person name="McGuire S."/>
            <person name="Gilderthorp R."/>
            <person name="Griffiths C."/>
            <person name="Manthravadi D."/>
            <person name="Nichol S."/>
            <person name="Barker G."/>
            <person name="Whitehead S."/>
            <person name="Kay M."/>
            <person name="Brown J."/>
            <person name="Murnane C."/>
            <person name="Gray E."/>
            <person name="Humphries M."/>
            <person name="Sycamore N."/>
            <person name="Barker D."/>
            <person name="Saunders D."/>
            <person name="Wallis J."/>
            <person name="Babbage A."/>
            <person name="Hammond S."/>
            <person name="Mashreghi-Mohammadi M."/>
            <person name="Barr L."/>
            <person name="Martin S."/>
            <person name="Wray P."/>
            <person name="Ellington A."/>
            <person name="Matthews N."/>
            <person name="Ellwood M."/>
            <person name="Woodmansey R."/>
            <person name="Clark G."/>
            <person name="Cooper J."/>
            <person name="Tromans A."/>
            <person name="Grafham D."/>
            <person name="Skuce C."/>
            <person name="Pandian R."/>
            <person name="Andrews R."/>
            <person name="Harrison E."/>
            <person name="Kimberley A."/>
            <person name="Garnett J."/>
            <person name="Fosker N."/>
            <person name="Hall R."/>
            <person name="Garner P."/>
            <person name="Kelly D."/>
            <person name="Bird C."/>
            <person name="Palmer S."/>
            <person name="Gehring I."/>
            <person name="Berger A."/>
            <person name="Dooley C.M."/>
            <person name="Ersan-Urun Z."/>
            <person name="Eser C."/>
            <person name="Geiger H."/>
            <person name="Geisler M."/>
            <person name="Karotki L."/>
            <person name="Kirn A."/>
            <person name="Konantz J."/>
            <person name="Konantz M."/>
            <person name="Oberlander M."/>
            <person name="Rudolph-Geiger S."/>
            <person name="Teucke M."/>
            <person name="Lanz C."/>
            <person name="Raddatz G."/>
            <person name="Osoegawa K."/>
            <person name="Zhu B."/>
            <person name="Rapp A."/>
            <person name="Widaa S."/>
            <person name="Langford C."/>
            <person name="Yang F."/>
            <person name="Schuster S.C."/>
            <person name="Carter N.P."/>
            <person name="Harrow J."/>
            <person name="Ning Z."/>
            <person name="Herrero J."/>
            <person name="Searle S.M."/>
            <person name="Enright A."/>
            <person name="Geisler R."/>
            <person name="Plasterk R.H."/>
            <person name="Lee C."/>
            <person name="Westerfield M."/>
            <person name="de Jong P.J."/>
            <person name="Zon L.I."/>
            <person name="Postlethwait J.H."/>
            <person name="Nusslein-Volhard C."/>
            <person name="Hubbard T.J."/>
            <person name="Roest Crollius H."/>
            <person name="Rogers J."/>
            <person name="Stemple D.L."/>
        </authorList>
    </citation>
    <scope>NUCLEOTIDE SEQUENCE [LARGE SCALE GENOMIC DNA]</scope>
    <source>
        <strain>Tuebingen</strain>
    </source>
</reference>
<reference key="2">
    <citation type="journal article" date="2019" name="PLoS ONE">
        <title>Ninjurin1 regulates striated muscle growth and differentiation.</title>
        <authorList>
            <person name="Kny M."/>
            <person name="Csalyi K.D."/>
            <person name="Klaeske K."/>
            <person name="Busch K."/>
            <person name="Meyer A.M."/>
            <person name="Merks A.M."/>
            <person name="Darm K."/>
            <person name="Dworatzek E."/>
            <person name="Fliegner D."/>
            <person name="Baczko I."/>
            <person name="Regitz-Zagrosek V."/>
            <person name="Butter C."/>
            <person name="Luft F.C."/>
            <person name="Panakova D."/>
            <person name="Fielitz J."/>
        </authorList>
    </citation>
    <scope>FUNCTION</scope>
    <scope>DISRUPTION PHENOTYPE</scope>
</reference>
<keyword id="KW-0037">Angiogenesis</keyword>
<keyword id="KW-0130">Cell adhesion</keyword>
<keyword id="KW-1003">Cell membrane</keyword>
<keyword id="KW-0204">Cytolysis</keyword>
<keyword id="KW-0325">Glycoprotein</keyword>
<keyword id="KW-0395">Inflammatory response</keyword>
<keyword id="KW-0472">Membrane</keyword>
<keyword id="KW-1185">Reference proteome</keyword>
<keyword id="KW-0770">Synapse</keyword>
<keyword id="KW-0812">Transmembrane</keyword>
<keyword id="KW-1133">Transmembrane helix</keyword>
<protein>
    <recommendedName>
        <fullName evidence="7">Ninjurin-1</fullName>
    </recommendedName>
    <alternativeName>
        <fullName evidence="1">Nerve injury-induced protein 1</fullName>
    </alternativeName>
</protein>
<feature type="chain" id="PRO_0000452827" description="Ninjurin-1">
    <location>
        <begin position="1"/>
        <end position="146"/>
    </location>
</feature>
<feature type="topological domain" description="Extracellular" evidence="2">
    <location>
        <begin position="1"/>
        <end position="75"/>
    </location>
</feature>
<feature type="transmembrane region" description="Helical; Name=Helix alpha3" evidence="2">
    <location>
        <begin position="76"/>
        <end position="100"/>
    </location>
</feature>
<feature type="topological domain" description="Cytoplasmic" evidence="2">
    <location>
        <begin position="101"/>
        <end position="110"/>
    </location>
</feature>
<feature type="transmembrane region" description="Helical; Name=Helix alpha4" evidence="2">
    <location>
        <begin position="111"/>
        <end position="135"/>
    </location>
</feature>
<feature type="topological domain" description="Extracellular" evidence="2">
    <location>
        <begin position="136"/>
        <end position="146"/>
    </location>
</feature>
<feature type="region of interest" description="Disordered" evidence="5">
    <location>
        <begin position="1"/>
        <end position="33"/>
    </location>
</feature>
<feature type="region of interest" description="Required to induce plasma membrane rupture" evidence="1">
    <location>
        <begin position="37"/>
        <end position="66"/>
    </location>
</feature>
<feature type="region of interest" description="Helix alpha1" evidence="2">
    <location>
        <begin position="41"/>
        <end position="52"/>
    </location>
</feature>
<feature type="region of interest" description="Helix alpha2" evidence="2">
    <location>
        <begin position="55"/>
        <end position="71"/>
    </location>
</feature>
<feature type="glycosylation site" description="N-linked (GlcNAc...) asparagine" evidence="4">
    <location>
        <position position="57"/>
    </location>
</feature>
<gene>
    <name evidence="7 9" type="primary">ninj1</name>
    <name evidence="9" type="ORF">si:ch1073-278o19.1</name>
</gene>